<gene>
    <name evidence="1" type="primary">ygfB</name>
    <name type="ordered locus">ECIAI39_3325</name>
</gene>
<organism>
    <name type="scientific">Escherichia coli O7:K1 (strain IAI39 / ExPEC)</name>
    <dbReference type="NCBI Taxonomy" id="585057"/>
    <lineage>
        <taxon>Bacteria</taxon>
        <taxon>Pseudomonadati</taxon>
        <taxon>Pseudomonadota</taxon>
        <taxon>Gammaproteobacteria</taxon>
        <taxon>Enterobacterales</taxon>
        <taxon>Enterobacteriaceae</taxon>
        <taxon>Escherichia</taxon>
    </lineage>
</organism>
<proteinExistence type="inferred from homology"/>
<name>YGFB_ECO7I</name>
<reference key="1">
    <citation type="journal article" date="2009" name="PLoS Genet.">
        <title>Organised genome dynamics in the Escherichia coli species results in highly diverse adaptive paths.</title>
        <authorList>
            <person name="Touchon M."/>
            <person name="Hoede C."/>
            <person name="Tenaillon O."/>
            <person name="Barbe V."/>
            <person name="Baeriswyl S."/>
            <person name="Bidet P."/>
            <person name="Bingen E."/>
            <person name="Bonacorsi S."/>
            <person name="Bouchier C."/>
            <person name="Bouvet O."/>
            <person name="Calteau A."/>
            <person name="Chiapello H."/>
            <person name="Clermont O."/>
            <person name="Cruveiller S."/>
            <person name="Danchin A."/>
            <person name="Diard M."/>
            <person name="Dossat C."/>
            <person name="Karoui M.E."/>
            <person name="Frapy E."/>
            <person name="Garry L."/>
            <person name="Ghigo J.M."/>
            <person name="Gilles A.M."/>
            <person name="Johnson J."/>
            <person name="Le Bouguenec C."/>
            <person name="Lescat M."/>
            <person name="Mangenot S."/>
            <person name="Martinez-Jehanne V."/>
            <person name="Matic I."/>
            <person name="Nassif X."/>
            <person name="Oztas S."/>
            <person name="Petit M.A."/>
            <person name="Pichon C."/>
            <person name="Rouy Z."/>
            <person name="Ruf C.S."/>
            <person name="Schneider D."/>
            <person name="Tourret J."/>
            <person name="Vacherie B."/>
            <person name="Vallenet D."/>
            <person name="Medigue C."/>
            <person name="Rocha E.P.C."/>
            <person name="Denamur E."/>
        </authorList>
    </citation>
    <scope>NUCLEOTIDE SEQUENCE [LARGE SCALE GENOMIC DNA]</scope>
    <source>
        <strain>IAI39 / ExPEC</strain>
    </source>
</reference>
<sequence>MSIQNEMPGYNEMNQYLNQQGTGLTPAEMHGLISGMICGGNDDSSWLPLLHDLTNEGMAFGHELAQALRKMHSATSDALQDDGFLFQLYLPDGDDVSVFDRADALAGWVNHFLLGLGVTQPKLDKVTGETGEAIDDLRNIAQLGYDEDEDQEELEMSLEEIIEYVRVAALLCHDTFTHPQPTAPEVQKPTLH</sequence>
<dbReference type="EMBL" id="CU928164">
    <property type="protein sequence ID" value="CAR19442.1"/>
    <property type="molecule type" value="Genomic_DNA"/>
</dbReference>
<dbReference type="RefSeq" id="WP_001295378.1">
    <property type="nucleotide sequence ID" value="NC_011750.1"/>
</dbReference>
<dbReference type="RefSeq" id="YP_002409246.1">
    <property type="nucleotide sequence ID" value="NC_011750.1"/>
</dbReference>
<dbReference type="SMR" id="B7NHX0"/>
<dbReference type="STRING" id="585057.ECIAI39_3325"/>
<dbReference type="GeneID" id="93779092"/>
<dbReference type="KEGG" id="ect:ECIAI39_3325"/>
<dbReference type="PATRIC" id="fig|585057.6.peg.3448"/>
<dbReference type="HOGENOM" id="CLU_085336_1_0_6"/>
<dbReference type="Proteomes" id="UP000000749">
    <property type="component" value="Chromosome"/>
</dbReference>
<dbReference type="GO" id="GO:0005829">
    <property type="term" value="C:cytosol"/>
    <property type="evidence" value="ECO:0007669"/>
    <property type="project" value="TreeGrafter"/>
</dbReference>
<dbReference type="FunFam" id="1.20.120.740:FF:000001">
    <property type="entry name" value="UPF0149 protein YgfB"/>
    <property type="match status" value="1"/>
</dbReference>
<dbReference type="Gene3D" id="1.20.120.740">
    <property type="entry name" value="YgfB uncharacterised protein family UPF0149, PF03695"/>
    <property type="match status" value="1"/>
</dbReference>
<dbReference type="HAMAP" id="MF_00346">
    <property type="entry name" value="UPF0149"/>
    <property type="match status" value="1"/>
</dbReference>
<dbReference type="InterPro" id="IPR011978">
    <property type="entry name" value="YgfB-like"/>
</dbReference>
<dbReference type="InterPro" id="IPR036255">
    <property type="entry name" value="YgfB-like_sf"/>
</dbReference>
<dbReference type="NCBIfam" id="NF002477">
    <property type="entry name" value="PRK01736.1"/>
    <property type="match status" value="1"/>
</dbReference>
<dbReference type="NCBIfam" id="TIGR02292">
    <property type="entry name" value="ygfB_yecA"/>
    <property type="match status" value="1"/>
</dbReference>
<dbReference type="PANTHER" id="PTHR37528">
    <property type="entry name" value="UPF0149 PROTEIN YGFB"/>
    <property type="match status" value="1"/>
</dbReference>
<dbReference type="PANTHER" id="PTHR37528:SF1">
    <property type="entry name" value="UPF0149 PROTEIN YGFB"/>
    <property type="match status" value="1"/>
</dbReference>
<dbReference type="Pfam" id="PF03695">
    <property type="entry name" value="UPF0149"/>
    <property type="match status" value="1"/>
</dbReference>
<dbReference type="SUPFAM" id="SSF101327">
    <property type="entry name" value="YgfB-like"/>
    <property type="match status" value="1"/>
</dbReference>
<evidence type="ECO:0000255" key="1">
    <source>
        <dbReference type="HAMAP-Rule" id="MF_00346"/>
    </source>
</evidence>
<comment type="similarity">
    <text evidence="1">Belongs to the UPF0149 family.</text>
</comment>
<feature type="chain" id="PRO_1000120468" description="UPF0149 protein YgfB">
    <location>
        <begin position="1"/>
        <end position="192"/>
    </location>
</feature>
<protein>
    <recommendedName>
        <fullName evidence="1">UPF0149 protein YgfB</fullName>
    </recommendedName>
</protein>
<accession>B7NHX0</accession>